<name>PROF9_MAIZE</name>
<organism>
    <name type="scientific">Zea mays</name>
    <name type="common">Maize</name>
    <dbReference type="NCBI Taxonomy" id="4577"/>
    <lineage>
        <taxon>Eukaryota</taxon>
        <taxon>Viridiplantae</taxon>
        <taxon>Streptophyta</taxon>
        <taxon>Embryophyta</taxon>
        <taxon>Tracheophyta</taxon>
        <taxon>Spermatophyta</taxon>
        <taxon>Magnoliopsida</taxon>
        <taxon>Liliopsida</taxon>
        <taxon>Poales</taxon>
        <taxon>Poaceae</taxon>
        <taxon>PACMAD clade</taxon>
        <taxon>Panicoideae</taxon>
        <taxon>Andropogonodae</taxon>
        <taxon>Andropogoneae</taxon>
        <taxon>Tripsacinae</taxon>
        <taxon>Zea</taxon>
    </lineage>
</organism>
<protein>
    <recommendedName>
        <fullName>Profilin-9</fullName>
    </recommendedName>
    <alternativeName>
        <fullName>Pollen allergen Zea m 12</fullName>
    </alternativeName>
    <alternativeName>
        <fullName>Pollen profilin variant 4</fullName>
    </alternativeName>
    <allergenName>Zea m 12</allergenName>
</protein>
<proteinExistence type="evidence at protein level"/>
<sequence>MSWQAYVDEHLMCEIEGHHLTSAAIVGHDGAVWAQSTAFPQFKTEEMTNIMKDFDEPGFLAPTGLFLGPTKYMVIQGEPGAVIRGKKGSGGITVKKTGQALVIGIYDEPMTPGQCNMVVERLGDYLLEQGM</sequence>
<comment type="function">
    <text evidence="1">Binds to actin and affects the structure of the cytoskeleton. At high concentrations, profilin prevents the polymerization of actin, whereas it enhances it at low concentrations (By similarity).</text>
</comment>
<comment type="subunit">
    <text evidence="1">Occurs in many kinds of cells as a complex with monomeric actin in a 1:1 ratio.</text>
</comment>
<comment type="subcellular location">
    <subcellularLocation>
        <location evidence="1">Cytoplasm</location>
        <location evidence="1">Cytoskeleton</location>
    </subcellularLocation>
</comment>
<comment type="PTM">
    <text evidence="1">Phosphorylated by MAP kinases.</text>
</comment>
<comment type="polymorphism">
    <text>Several isoforms of the allergen exist due to polymorphism.</text>
</comment>
<comment type="allergen">
    <text>Causes an allergic reaction in human.</text>
</comment>
<comment type="miscellaneous">
    <text evidence="3">The variability of the residues taking part of IgE-binding epitopes might be responsible of the difference in cross-reactivity among olive pollen cultivars, and between distantly related pollen species, leading to a variable range of allergy reactions among atopic patients.</text>
</comment>
<comment type="similarity">
    <text evidence="2">Belongs to the profilin family.</text>
</comment>
<dbReference type="EMBL" id="DQ663562">
    <property type="protein sequence ID" value="ABG81315.1"/>
    <property type="molecule type" value="mRNA"/>
</dbReference>
<dbReference type="RefSeq" id="NP_001106002.1">
    <property type="nucleotide sequence ID" value="NM_001112532.1"/>
</dbReference>
<dbReference type="SMR" id="A4KA58"/>
<dbReference type="FunCoup" id="A4KA58">
    <property type="interactions" value="773"/>
</dbReference>
<dbReference type="STRING" id="4577.A4KA58"/>
<dbReference type="Allergome" id="682">
    <property type="allergen name" value="Zea m 12"/>
</dbReference>
<dbReference type="InParanoid" id="A4KA58"/>
<dbReference type="Proteomes" id="UP000007305">
    <property type="component" value="Unplaced"/>
</dbReference>
<dbReference type="ExpressionAtlas" id="A4KA58">
    <property type="expression patterns" value="baseline and differential"/>
</dbReference>
<dbReference type="GO" id="GO:0005938">
    <property type="term" value="C:cell cortex"/>
    <property type="evidence" value="ECO:0000318"/>
    <property type="project" value="GO_Central"/>
</dbReference>
<dbReference type="GO" id="GO:0005856">
    <property type="term" value="C:cytoskeleton"/>
    <property type="evidence" value="ECO:0007669"/>
    <property type="project" value="UniProtKB-SubCell"/>
</dbReference>
<dbReference type="GO" id="GO:0003785">
    <property type="term" value="F:actin monomer binding"/>
    <property type="evidence" value="ECO:0000318"/>
    <property type="project" value="GO_Central"/>
</dbReference>
<dbReference type="GO" id="GO:0070064">
    <property type="term" value="F:proline-rich region binding"/>
    <property type="evidence" value="ECO:0007669"/>
    <property type="project" value="UniProtKB-ARBA"/>
</dbReference>
<dbReference type="GO" id="GO:0007097">
    <property type="term" value="P:nuclear migration"/>
    <property type="evidence" value="ECO:0007669"/>
    <property type="project" value="UniProtKB-ARBA"/>
</dbReference>
<dbReference type="GO" id="GO:0032956">
    <property type="term" value="P:regulation of actin cytoskeleton organization"/>
    <property type="evidence" value="ECO:0007669"/>
    <property type="project" value="UniProtKB-ARBA"/>
</dbReference>
<dbReference type="CDD" id="cd00148">
    <property type="entry name" value="PROF"/>
    <property type="match status" value="1"/>
</dbReference>
<dbReference type="FunFam" id="3.30.450.30:FF:000001">
    <property type="entry name" value="Profilin"/>
    <property type="match status" value="1"/>
</dbReference>
<dbReference type="Gene3D" id="3.30.450.30">
    <property type="entry name" value="Dynein light chain 2a, cytoplasmic"/>
    <property type="match status" value="1"/>
</dbReference>
<dbReference type="InterPro" id="IPR048278">
    <property type="entry name" value="PFN"/>
</dbReference>
<dbReference type="InterPro" id="IPR005455">
    <property type="entry name" value="PFN_euk"/>
</dbReference>
<dbReference type="InterPro" id="IPR036140">
    <property type="entry name" value="PFN_sf"/>
</dbReference>
<dbReference type="InterPro" id="IPR027310">
    <property type="entry name" value="Profilin_CS"/>
</dbReference>
<dbReference type="PANTHER" id="PTHR11604">
    <property type="entry name" value="PROFILIN"/>
    <property type="match status" value="1"/>
</dbReference>
<dbReference type="PANTHER" id="PTHR11604:SF67">
    <property type="entry name" value="PROFILIN LP04"/>
    <property type="match status" value="1"/>
</dbReference>
<dbReference type="Pfam" id="PF00235">
    <property type="entry name" value="Profilin"/>
    <property type="match status" value="1"/>
</dbReference>
<dbReference type="PRINTS" id="PR00392">
    <property type="entry name" value="PROFILIN"/>
</dbReference>
<dbReference type="PRINTS" id="PR01640">
    <property type="entry name" value="PROFILINPLNT"/>
</dbReference>
<dbReference type="SMART" id="SM00392">
    <property type="entry name" value="PROF"/>
    <property type="match status" value="1"/>
</dbReference>
<dbReference type="SUPFAM" id="SSF55770">
    <property type="entry name" value="Profilin (actin-binding protein)"/>
    <property type="match status" value="1"/>
</dbReference>
<dbReference type="PROSITE" id="PS00414">
    <property type="entry name" value="PROFILIN"/>
    <property type="match status" value="1"/>
</dbReference>
<reference key="1">
    <citation type="journal article" date="2012" name="PLoS ONE">
        <title>Characterization of profilin polymorphism in pollen with a focus on multifunctionality.</title>
        <authorList>
            <person name="Jimenez-Lopez J.C."/>
            <person name="Morales S."/>
            <person name="Castro A.J."/>
            <person name="Volkmann D."/>
            <person name="Rodriguez-Garcia M.I."/>
            <person name="Alche Jde D."/>
        </authorList>
    </citation>
    <scope>NUCLEOTIDE SEQUENCE [MRNA]</scope>
    <scope>POLYMORPHISM</scope>
    <source>
        <strain>cv. Birko</strain>
    </source>
</reference>
<reference key="2">
    <citation type="journal article" date="2013" name="PLoS ONE">
        <title>Analysis of the effects of polymorphism on pollen profilin structural functionality and the generation of conformational, T- and B-cell epitopes.</title>
        <authorList>
            <person name="Jimenez-Lopez J.C."/>
            <person name="Rodriguez-Garcia M.I."/>
            <person name="Alche J.D."/>
        </authorList>
    </citation>
    <scope>3D-STRUCTURE MODELING</scope>
    <scope>DISULFIDE BOND</scope>
</reference>
<evidence type="ECO:0000250" key="1"/>
<evidence type="ECO:0000305" key="2"/>
<evidence type="ECO:0000305" key="3">
    <source>
    </source>
</evidence>
<feature type="initiator methionine" description="Removed" evidence="1">
    <location>
        <position position="1"/>
    </location>
</feature>
<feature type="chain" id="PRO_0000425068" description="Profilin-9">
    <location>
        <begin position="2"/>
        <end position="131"/>
    </location>
</feature>
<feature type="short sequence motif" description="Involved in PIP2 interaction">
    <location>
        <begin position="81"/>
        <end position="97"/>
    </location>
</feature>
<feature type="modified residue" description="Phosphothreonine" evidence="1">
    <location>
        <position position="111"/>
    </location>
</feature>
<feature type="disulfide bond" evidence="3">
    <location>
        <begin position="13"/>
        <end position="115"/>
    </location>
</feature>
<accession>A4KA58</accession>
<keyword id="KW-0009">Actin-binding</keyword>
<keyword id="KW-0020">Allergen</keyword>
<keyword id="KW-0963">Cytoplasm</keyword>
<keyword id="KW-0206">Cytoskeleton</keyword>
<keyword id="KW-1015">Disulfide bond</keyword>
<keyword id="KW-0597">Phosphoprotein</keyword>
<keyword id="KW-1185">Reference proteome</keyword>